<proteinExistence type="inferred from homology"/>
<evidence type="ECO:0000255" key="1">
    <source>
        <dbReference type="HAMAP-Rule" id="MF_00091"/>
    </source>
</evidence>
<dbReference type="EC" id="4.4.1.21" evidence="1"/>
<dbReference type="EMBL" id="CP001321">
    <property type="protein sequence ID" value="ACL31767.1"/>
    <property type="molecule type" value="Genomic_DNA"/>
</dbReference>
<dbReference type="RefSeq" id="WP_012621532.1">
    <property type="nucleotide sequence ID" value="NC_011852.1"/>
</dbReference>
<dbReference type="SMR" id="B8F365"/>
<dbReference type="STRING" id="557723.HAPS_0063"/>
<dbReference type="KEGG" id="hap:HAPS_0063"/>
<dbReference type="PATRIC" id="fig|557723.8.peg.66"/>
<dbReference type="HOGENOM" id="CLU_107531_2_0_6"/>
<dbReference type="Proteomes" id="UP000006743">
    <property type="component" value="Chromosome"/>
</dbReference>
<dbReference type="GO" id="GO:0005506">
    <property type="term" value="F:iron ion binding"/>
    <property type="evidence" value="ECO:0007669"/>
    <property type="project" value="InterPro"/>
</dbReference>
<dbReference type="GO" id="GO:0043768">
    <property type="term" value="F:S-ribosylhomocysteine lyase activity"/>
    <property type="evidence" value="ECO:0007669"/>
    <property type="project" value="UniProtKB-UniRule"/>
</dbReference>
<dbReference type="GO" id="GO:0009372">
    <property type="term" value="P:quorum sensing"/>
    <property type="evidence" value="ECO:0007669"/>
    <property type="project" value="UniProtKB-UniRule"/>
</dbReference>
<dbReference type="Gene3D" id="3.30.1360.80">
    <property type="entry name" value="S-ribosylhomocysteinase (LuxS)"/>
    <property type="match status" value="1"/>
</dbReference>
<dbReference type="HAMAP" id="MF_00091">
    <property type="entry name" value="LuxS"/>
    <property type="match status" value="1"/>
</dbReference>
<dbReference type="InterPro" id="IPR037005">
    <property type="entry name" value="LuxS_sf"/>
</dbReference>
<dbReference type="InterPro" id="IPR011249">
    <property type="entry name" value="Metalloenz_LuxS/M16"/>
</dbReference>
<dbReference type="InterPro" id="IPR003815">
    <property type="entry name" value="S-ribosylhomocysteinase"/>
</dbReference>
<dbReference type="NCBIfam" id="NF002602">
    <property type="entry name" value="PRK02260.1-2"/>
    <property type="match status" value="1"/>
</dbReference>
<dbReference type="PANTHER" id="PTHR35799">
    <property type="entry name" value="S-RIBOSYLHOMOCYSTEINE LYASE"/>
    <property type="match status" value="1"/>
</dbReference>
<dbReference type="PANTHER" id="PTHR35799:SF1">
    <property type="entry name" value="S-RIBOSYLHOMOCYSTEINE LYASE"/>
    <property type="match status" value="1"/>
</dbReference>
<dbReference type="Pfam" id="PF02664">
    <property type="entry name" value="LuxS"/>
    <property type="match status" value="1"/>
</dbReference>
<dbReference type="PIRSF" id="PIRSF006160">
    <property type="entry name" value="AI2"/>
    <property type="match status" value="1"/>
</dbReference>
<dbReference type="PRINTS" id="PR01487">
    <property type="entry name" value="LUXSPROTEIN"/>
</dbReference>
<dbReference type="SUPFAM" id="SSF63411">
    <property type="entry name" value="LuxS/MPP-like metallohydrolase"/>
    <property type="match status" value="1"/>
</dbReference>
<gene>
    <name evidence="1" type="primary">luxS</name>
    <name type="ordered locus">HAPS_0063</name>
</gene>
<protein>
    <recommendedName>
        <fullName evidence="1">S-ribosylhomocysteine lyase</fullName>
        <ecNumber evidence="1">4.4.1.21</ecNumber>
    </recommendedName>
    <alternativeName>
        <fullName evidence="1">AI-2 synthesis protein</fullName>
    </alternativeName>
    <alternativeName>
        <fullName evidence="1">Autoinducer-2 production protein LuxS</fullName>
    </alternativeName>
</protein>
<keyword id="KW-0071">Autoinducer synthesis</keyword>
<keyword id="KW-0408">Iron</keyword>
<keyword id="KW-0456">Lyase</keyword>
<keyword id="KW-0479">Metal-binding</keyword>
<keyword id="KW-0673">Quorum sensing</keyword>
<keyword id="KW-1185">Reference proteome</keyword>
<name>LUXS_GLAP5</name>
<accession>B8F365</accession>
<feature type="chain" id="PRO_1000118539" description="S-ribosylhomocysteine lyase">
    <location>
        <begin position="1"/>
        <end position="169"/>
    </location>
</feature>
<feature type="binding site" evidence="1">
    <location>
        <position position="54"/>
    </location>
    <ligand>
        <name>Fe cation</name>
        <dbReference type="ChEBI" id="CHEBI:24875"/>
    </ligand>
</feature>
<feature type="binding site" evidence="1">
    <location>
        <position position="58"/>
    </location>
    <ligand>
        <name>Fe cation</name>
        <dbReference type="ChEBI" id="CHEBI:24875"/>
    </ligand>
</feature>
<feature type="binding site" evidence="1">
    <location>
        <position position="129"/>
    </location>
    <ligand>
        <name>Fe cation</name>
        <dbReference type="ChEBI" id="CHEBI:24875"/>
    </ligand>
</feature>
<sequence>MPLLDSFKVDHTRMNAPAVRVAKTMTTPKGDTITVFDLRFVRPNIEILSPRGIHTMEHLFAGFMRDHLNSDTVEIIDISPMGCRTGFYMSLIGSPSAEEVAKAWEASMRDALEKVPDETKIPELNEFQCGSYKEHSLADAHEIVRNVLKQPIGINRNKDLALDEKLLNP</sequence>
<reference key="1">
    <citation type="journal article" date="2009" name="J. Bacteriol.">
        <title>Complete genome sequence of Haemophilus parasuis SH0165.</title>
        <authorList>
            <person name="Yue M."/>
            <person name="Yang F."/>
            <person name="Yang J."/>
            <person name="Bei W."/>
            <person name="Cai X."/>
            <person name="Chen L."/>
            <person name="Dong J."/>
            <person name="Zhou R."/>
            <person name="Jin M."/>
            <person name="Jin Q."/>
            <person name="Chen H."/>
        </authorList>
    </citation>
    <scope>NUCLEOTIDE SEQUENCE [LARGE SCALE GENOMIC DNA]</scope>
    <source>
        <strain>SH0165</strain>
    </source>
</reference>
<organism>
    <name type="scientific">Glaesserella parasuis serovar 5 (strain SH0165)</name>
    <name type="common">Haemophilus parasuis</name>
    <dbReference type="NCBI Taxonomy" id="557723"/>
    <lineage>
        <taxon>Bacteria</taxon>
        <taxon>Pseudomonadati</taxon>
        <taxon>Pseudomonadota</taxon>
        <taxon>Gammaproteobacteria</taxon>
        <taxon>Pasteurellales</taxon>
        <taxon>Pasteurellaceae</taxon>
        <taxon>Glaesserella</taxon>
    </lineage>
</organism>
<comment type="function">
    <text evidence="1">Involved in the synthesis of autoinducer 2 (AI-2) which is secreted by bacteria and is used to communicate both the cell density and the metabolic potential of the environment. The regulation of gene expression in response to changes in cell density is called quorum sensing. Catalyzes the transformation of S-ribosylhomocysteine (RHC) to homocysteine (HC) and 4,5-dihydroxy-2,3-pentadione (DPD).</text>
</comment>
<comment type="catalytic activity">
    <reaction evidence="1">
        <text>S-(5-deoxy-D-ribos-5-yl)-L-homocysteine = (S)-4,5-dihydroxypentane-2,3-dione + L-homocysteine</text>
        <dbReference type="Rhea" id="RHEA:17753"/>
        <dbReference type="ChEBI" id="CHEBI:29484"/>
        <dbReference type="ChEBI" id="CHEBI:58195"/>
        <dbReference type="ChEBI" id="CHEBI:58199"/>
        <dbReference type="EC" id="4.4.1.21"/>
    </reaction>
</comment>
<comment type="cofactor">
    <cofactor evidence="1">
        <name>Fe cation</name>
        <dbReference type="ChEBI" id="CHEBI:24875"/>
    </cofactor>
    <text evidence="1">Binds 1 Fe cation per subunit.</text>
</comment>
<comment type="subunit">
    <text evidence="1">Homodimer.</text>
</comment>
<comment type="similarity">
    <text evidence="1">Belongs to the LuxS family.</text>
</comment>